<protein>
    <recommendedName>
        <fullName>Readthrough protein P3-RTD</fullName>
    </recommendedName>
    <alternativeName>
        <fullName evidence="4">P3-P5 readthrough protein</fullName>
    </alternativeName>
    <alternativeName>
        <fullName>P74</fullName>
    </alternativeName>
    <alternativeName>
        <fullName>Readthrough protein</fullName>
        <shortName>RT protein</shortName>
    </alternativeName>
    <component>
        <recommendedName>
            <fullName evidence="2">Minor capsid readthrough protein</fullName>
            <shortName evidence="2">Minor capsid RT protein</shortName>
        </recommendedName>
    </component>
    <component>
        <recommendedName>
            <fullName evidence="7">Cleaved product</fullName>
        </recommendedName>
    </component>
</protein>
<keyword id="KW-0167">Capsid protein</keyword>
<keyword id="KW-1031">Host cell junction</keyword>
<keyword id="KW-1049">Host periplasm</keyword>
<keyword id="KW-0946">Virion</keyword>
<reference key="1">
    <citation type="journal article" date="1988" name="Nucleic Acids Res.">
        <title>Nucleotide sequence of beet western yellows virus RNA.</title>
        <authorList>
            <person name="Veidt I."/>
            <person name="Lot H."/>
            <person name="Leiser M."/>
            <person name="Scheidecker D."/>
            <person name="Guilley H."/>
            <person name="Richards K.E."/>
            <person name="Jonard G."/>
        </authorList>
    </citation>
    <scope>NUCLEOTIDE SEQUENCE [GENOMIC RNA]</scope>
</reference>
<reference key="2">
    <citation type="journal article" date="2005" name="J. Virol.">
        <title>The polerovirus minor capsid protein determines vector specificity and intestinal tropism in the aphid.</title>
        <authorList>
            <person name="Brault V."/>
            <person name="Perigon S."/>
            <person name="Reinbold C."/>
            <person name="Erdinger M."/>
            <person name="Scheidecker D."/>
            <person name="Herrbach E."/>
            <person name="Richards K.E."/>
            <person name="Ziegler-Graff V."/>
        </authorList>
    </citation>
    <scope>FUNCTION (MINOR CAPSID READTHROUGH PROTEIN)</scope>
</reference>
<organism>
    <name type="scientific">Beet western yellows virus (isolate GB1)</name>
    <name type="common">BWYV</name>
    <dbReference type="NCBI Taxonomy" id="12044"/>
    <lineage>
        <taxon>Viruses</taxon>
        <taxon>Riboviria</taxon>
        <taxon>Orthornavirae</taxon>
        <taxon>Pisuviricota</taxon>
        <taxon>Pisoniviricetes</taxon>
        <taxon>Sobelivirales</taxon>
        <taxon>Solemoviridae</taxon>
        <taxon>Polerovirus</taxon>
        <taxon>Beet western yellows virus</taxon>
    </lineage>
</organism>
<comment type="function">
    <molecule>Minor capsid readthrough protein</molecule>
    <text evidence="3 6">Minor component of the viral capsid involved in aphid transmission and virus accumulation in the host (PubMed:16014930). Required for the virus to move through the aphid (By similarity). The RTD domain of the protein is exposed on the surface of the particle and determines the vector specificity and intestinal tropism in the aphid (PubMed:16014930).</text>
</comment>
<comment type="subcellular location">
    <molecule>Minor capsid readthrough protein</molecule>
    <subcellularLocation>
        <location evidence="4">Virion</location>
    </subcellularLocation>
    <subcellularLocation>
        <location evidence="4">Host cell junction</location>
        <location evidence="4">Host plasmodesma</location>
    </subcellularLocation>
    <subcellularLocation>
        <location evidence="4">Host periplasm</location>
    </subcellularLocation>
</comment>
<comment type="subcellular location">
    <molecule>Cleaved product</molecule>
    <subcellularLocation>
        <location evidence="4">Virion</location>
    </subcellularLocation>
</comment>
<comment type="domain">
    <molecule>Readthrough protein P3-RTD</molecule>
    <text evidence="2 3 7">The N-terminus is highly basic like those of many plant virus capsid proteins (Probable). These regions may be involved in protein-RNA interaction (Probable). The RTD N-terminus is responsible for aphid transmission and aphid endosymbiont interaction (By similarity). The readthrough domain is required for transport of virus through membranes of the aphid salivary glands (By similarity).</text>
</comment>
<comment type="PTM">
    <molecule>Readthrough protein P3-RTD</molecule>
    <text evidence="2 4">In virus particles, more than 200 amino acids are proteolytically cleaved releasing the C-terminus part of the RTD domain (By similarity). The cleaved product remains attached to the virus particle (By similarity).</text>
</comment>
<comment type="miscellaneous">
    <molecule>Readthrough protein P3-RTD</molecule>
    <text evidence="1">This protein is translated as a fusion protein by episodic readthrough of the major coat protein termination codon. It is composed of the major capsid protein fused to a long C-terminal extension called the readthrough domain (RTD). Readthrough of the terminator codon TAG occurs between the codons for 201-Lys and 203-Val (By similarity).</text>
</comment>
<comment type="similarity">
    <text evidence="7">Belongs to the luteoviruses readthrough protein family.</text>
</comment>
<comment type="sequence caution" evidence="7">
    <conflict type="miscellaneous discrepancy">
        <sequence resource="EMBL-CDS" id="CAA31461"/>
    </conflict>
    <text>Readthrough of an in-frame TAG stop codon in position 202 translated as Tyr.</text>
</comment>
<evidence type="ECO:0000250" key="1"/>
<evidence type="ECO:0000250" key="2">
    <source>
        <dbReference type="UniProtKB" id="P09514"/>
    </source>
</evidence>
<evidence type="ECO:0000250" key="3">
    <source>
        <dbReference type="UniProtKB" id="P09516"/>
    </source>
</evidence>
<evidence type="ECO:0000250" key="4">
    <source>
        <dbReference type="UniProtKB" id="P17525"/>
    </source>
</evidence>
<evidence type="ECO:0000256" key="5">
    <source>
        <dbReference type="SAM" id="MobiDB-lite"/>
    </source>
</evidence>
<evidence type="ECO:0000269" key="6">
    <source>
    </source>
</evidence>
<evidence type="ECO:0000305" key="7"/>
<sequence length="673" mass="74593">NTVVGRRTINGRRRPRRQTRRAQRSQPVVVVQTSRATQRRPRRRRRGNNRTRGTVPTRGAGSSETFVFSKDNLAGSSSGRITFGPSLSDCPAFSNGILKAYHEYKISMVILEFVSEASSQNSGSIAYELDPHCKLNSLSSTINKFGITKPGKAAFTASYINGKEWHDVAEDQFRILYKGNGSSSIAGSFRITIKCQFHNPKYVDEEPGPSPGPSPSPQPTPQKKYRFIVYTGVPVTRIMAQSTDDAISLYDMPSQRFRYIEDENMNWTNLDSRWYSQNSLKAIPMIIVPVPQGEWTVEISMEGYQPTSSTTDPNKDKQDGLIAYNDDLSEGWNVGIYNNVEITNNKADNTLKYGHPDMELNGCHFNQGQCLERDGDLTCHIKTTGDNASFFVGRPAVQKQSKYNYAVSYGAWTDRMMEIGMIAIALDEQGSSGSAKTKRPKRVGHSMAVSTWETINLPEKENSEEIQTSQRQDFKTPPTAGGGSDMLDVEEGGLPLSVEEEIPDFVGDNPWSNITTENSQEEEAMSSKSGLTPQLKPPGLPKPQPIRRLKSFDATPDLVEAWRPDVNPGYSKADWAVATIIAGGSIKDGRSMIDKRDKAVLDGRKSWGSSLASSLTGGTLKASAKSEKLAKLTTSERARFEQIKRQQGSVRASEFLEQILAGKDPDPKFLRDR</sequence>
<accession>P09515</accession>
<gene>
    <name type="ORF">ORF3/ORF5</name>
</gene>
<feature type="chain" id="PRO_0000222427" description="Readthrough protein P3-RTD">
    <location>
        <begin position="1" status="less than"/>
        <end position="673"/>
    </location>
</feature>
<feature type="chain" id="PRO_0000455341" description="Minor capsid readthrough protein">
    <location>
        <begin position="1"/>
        <end position="436"/>
    </location>
</feature>
<feature type="chain" id="PRO_0000455342" description="Cleaved product">
    <location>
        <begin position="437"/>
        <end position="673"/>
    </location>
</feature>
<feature type="region of interest" description="Disordered" evidence="5">
    <location>
        <begin position="1"/>
        <end position="63"/>
    </location>
</feature>
<feature type="region of interest" description="Disordered" evidence="5">
    <location>
        <begin position="202"/>
        <end position="222"/>
    </location>
</feature>
<feature type="region of interest" description="Readthrough domain (RTD)">
    <location>
        <begin position="203"/>
        <end position="673"/>
    </location>
</feature>
<feature type="region of interest" description="Readthrough domain (RTD)" evidence="2">
    <location>
        <begin position="203"/>
        <end position="669"/>
    </location>
</feature>
<feature type="region of interest" description="Disordered" evidence="5">
    <location>
        <begin position="456"/>
        <end position="490"/>
    </location>
</feature>
<feature type="region of interest" description="Disordered" evidence="5">
    <location>
        <begin position="503"/>
        <end position="547"/>
    </location>
</feature>
<feature type="compositionally biased region" description="Basic residues" evidence="5">
    <location>
        <begin position="9"/>
        <end position="23"/>
    </location>
</feature>
<feature type="compositionally biased region" description="Basic residues" evidence="5">
    <location>
        <begin position="37"/>
        <end position="49"/>
    </location>
</feature>
<feature type="compositionally biased region" description="Low complexity" evidence="5">
    <location>
        <begin position="50"/>
        <end position="59"/>
    </location>
</feature>
<feature type="compositionally biased region" description="Pro residues" evidence="5">
    <location>
        <begin position="208"/>
        <end position="220"/>
    </location>
</feature>
<feature type="compositionally biased region" description="Pro residues" evidence="5">
    <location>
        <begin position="535"/>
        <end position="544"/>
    </location>
</feature>
<feature type="site" description="Cleavage" evidence="2">
    <location>
        <begin position="436"/>
        <end position="437"/>
    </location>
</feature>
<feature type="non-terminal residue">
    <location>
        <position position="1"/>
    </location>
</feature>
<organismHost>
    <name type="scientific">Beta vulgaris</name>
    <name type="common">Sugar beet</name>
    <dbReference type="NCBI Taxonomy" id="161934"/>
</organismHost>
<organismHost>
    <name type="scientific">Brassica napus subsp. rapifera</name>
    <dbReference type="NCBI Taxonomy" id="3709"/>
</organismHost>
<organismHost>
    <name type="scientific">Brassica napus var. napus</name>
    <dbReference type="NCBI Taxonomy" id="138011"/>
</organismHost>
<organismHost>
    <name type="scientific">Brassica nigra</name>
    <name type="common">Black mustard</name>
    <name type="synonym">Sinapis nigra</name>
    <dbReference type="NCBI Taxonomy" id="3710"/>
</organismHost>
<organismHost>
    <name type="scientific">Brassica oleracea var. botrytis</name>
    <name type="common">Cauliflower</name>
    <dbReference type="NCBI Taxonomy" id="3715"/>
</organismHost>
<organismHost>
    <name type="scientific">Brassica oleracea var. capitata</name>
    <name type="common">Cabbage</name>
    <dbReference type="NCBI Taxonomy" id="3716"/>
</organismHost>
<organismHost>
    <name type="scientific">Brassica rapa subsp. rapa</name>
    <name type="common">Turnip</name>
    <dbReference type="NCBI Taxonomy" id="51350"/>
</organismHost>
<organismHost>
    <name type="scientific">Capsicum annuum</name>
    <name type="common">Capsicum pepper</name>
    <dbReference type="NCBI Taxonomy" id="4072"/>
</organismHost>
<organismHost>
    <name type="scientific">Cicer arietinum</name>
    <name type="common">Chickpea</name>
    <name type="synonym">Garbanzo</name>
    <dbReference type="NCBI Taxonomy" id="3827"/>
</organismHost>
<organismHost>
    <name type="scientific">Citrullus lanatus</name>
    <name type="common">Watermelon</name>
    <name type="synonym">Citrullus vulgaris</name>
    <dbReference type="NCBI Taxonomy" id="3654"/>
</organismHost>
<organismHost>
    <name type="scientific">Crambe hispanica subsp. abyssinica</name>
    <name type="common">Abyssinian kale</name>
    <name type="synonym">Crambe abyssinica</name>
    <dbReference type="NCBI Taxonomy" id="3721"/>
</organismHost>
<organismHost>
    <name type="scientific">Cucumis sativus</name>
    <name type="common">Cucumber</name>
    <dbReference type="NCBI Taxonomy" id="3659"/>
</organismHost>
<organismHost>
    <name type="scientific">Cucurbita pepo</name>
    <name type="common">Vegetable marrow</name>
    <name type="synonym">Summer squash</name>
    <dbReference type="NCBI Taxonomy" id="3663"/>
</organismHost>
<organismHost>
    <name type="scientific">Glycine max</name>
    <name type="common">Soybean</name>
    <name type="synonym">Glycine hispida</name>
    <dbReference type="NCBI Taxonomy" id="3847"/>
</organismHost>
<organismHost>
    <name type="scientific">Helianthus annuus</name>
    <name type="common">Common sunflower</name>
    <dbReference type="NCBI Taxonomy" id="4232"/>
</organismHost>
<organismHost>
    <name type="scientific">Lactuca sativa</name>
    <name type="common">Garden lettuce</name>
    <dbReference type="NCBI Taxonomy" id="4236"/>
</organismHost>
<organismHost>
    <name type="scientific">Phlox drummondii</name>
    <name type="common">Annual phlox</name>
    <dbReference type="NCBI Taxonomy" id="103529"/>
</organismHost>
<organismHost>
    <name type="scientific">Pisum sativum</name>
    <name type="common">Garden pea</name>
    <name type="synonym">Lathyrus oleraceus</name>
    <dbReference type="NCBI Taxonomy" id="3888"/>
</organismHost>
<organismHost>
    <name type="scientific">Raphanus sativus</name>
    <name type="common">Radish</name>
    <name type="synonym">Raphanus raphanistrum var. sativus</name>
    <dbReference type="NCBI Taxonomy" id="3726"/>
</organismHost>
<organismHost>
    <name type="scientific">Solanum lycopersicum</name>
    <name type="common">Tomato</name>
    <name type="synonym">Lycopersicon esculentum</name>
    <dbReference type="NCBI Taxonomy" id="4081"/>
</organismHost>
<organismHost>
    <name type="scientific">Spinacia oleracea</name>
    <name type="common">Spinach</name>
    <dbReference type="NCBI Taxonomy" id="3562"/>
</organismHost>
<organismHost>
    <name type="scientific">Trifolium subterraneum</name>
    <name type="common">Subterranean clover</name>
    <dbReference type="NCBI Taxonomy" id="3900"/>
</organismHost>
<organismHost>
    <name type="scientific">Vicia faba</name>
    <name type="common">Broad bean</name>
    <name type="synonym">Faba vulgaris</name>
    <dbReference type="NCBI Taxonomy" id="3906"/>
</organismHost>
<proteinExistence type="inferred from homology"/>
<name>MCAPS_BWYVG</name>
<dbReference type="EMBL" id="X13062">
    <property type="protein sequence ID" value="CAA31461.1"/>
    <property type="status" value="ALT_SEQ"/>
    <property type="molecule type" value="Genomic_RNA"/>
</dbReference>
<dbReference type="PIR" id="S01937">
    <property type="entry name" value="S01937"/>
</dbReference>
<dbReference type="SMR" id="P09515"/>
<dbReference type="GO" id="GO:0044229">
    <property type="term" value="C:host cell periplasmic space"/>
    <property type="evidence" value="ECO:0007669"/>
    <property type="project" value="UniProtKB-SubCell"/>
</dbReference>
<dbReference type="GO" id="GO:0044219">
    <property type="term" value="C:host cell plasmodesma"/>
    <property type="evidence" value="ECO:0007669"/>
    <property type="project" value="UniProtKB-SubCell"/>
</dbReference>
<dbReference type="GO" id="GO:0019028">
    <property type="term" value="C:viral capsid"/>
    <property type="evidence" value="ECO:0007669"/>
    <property type="project" value="UniProtKB-KW"/>
</dbReference>
<dbReference type="GO" id="GO:0005198">
    <property type="term" value="F:structural molecule activity"/>
    <property type="evidence" value="ECO:0007669"/>
    <property type="project" value="InterPro"/>
</dbReference>
<dbReference type="InterPro" id="IPR001517">
    <property type="entry name" value="Luteo_coat"/>
</dbReference>
<dbReference type="InterPro" id="IPR002929">
    <property type="entry name" value="PLrV_ORF5"/>
</dbReference>
<dbReference type="Pfam" id="PF00894">
    <property type="entry name" value="Luteo_coat"/>
    <property type="match status" value="1"/>
</dbReference>
<dbReference type="Pfam" id="PF01690">
    <property type="entry name" value="PLRV_ORF5"/>
    <property type="match status" value="1"/>
</dbReference>
<dbReference type="PRINTS" id="PR00910">
    <property type="entry name" value="LVIRUSORF6"/>
</dbReference>